<proteinExistence type="inferred from homology"/>
<accession>Q4X0S3</accession>
<keyword id="KW-0029">Amino-acid transport</keyword>
<keyword id="KW-0472">Membrane</keyword>
<keyword id="KW-1185">Reference proteome</keyword>
<keyword id="KW-0812">Transmembrane</keyword>
<keyword id="KW-1133">Transmembrane helix</keyword>
<keyword id="KW-0813">Transport</keyword>
<keyword id="KW-0926">Vacuole</keyword>
<comment type="function">
    <text evidence="1">Involved in vacuolar transport and vacuole pH homeostasis. Also required for cytokinesis (By similarity).</text>
</comment>
<comment type="subcellular location">
    <subcellularLocation>
        <location evidence="1">Vacuole membrane</location>
        <topology evidence="1">Multi-pass membrane protein</topology>
    </subcellularLocation>
</comment>
<comment type="similarity">
    <text evidence="3">Belongs to the battenin family.</text>
</comment>
<organism>
    <name type="scientific">Aspergillus fumigatus (strain ATCC MYA-4609 / CBS 101355 / FGSC A1100 / Af293)</name>
    <name type="common">Neosartorya fumigata</name>
    <dbReference type="NCBI Taxonomy" id="330879"/>
    <lineage>
        <taxon>Eukaryota</taxon>
        <taxon>Fungi</taxon>
        <taxon>Dikarya</taxon>
        <taxon>Ascomycota</taxon>
        <taxon>Pezizomycotina</taxon>
        <taxon>Eurotiomycetes</taxon>
        <taxon>Eurotiomycetidae</taxon>
        <taxon>Eurotiales</taxon>
        <taxon>Aspergillaceae</taxon>
        <taxon>Aspergillus</taxon>
        <taxon>Aspergillus subgen. Fumigati</taxon>
    </lineage>
</organism>
<evidence type="ECO:0000250" key="1"/>
<evidence type="ECO:0000255" key="2"/>
<evidence type="ECO:0000305" key="3"/>
<name>BTN1_ASPFU</name>
<dbReference type="EMBL" id="AAHF01000001">
    <property type="protein sequence ID" value="EAL93542.1"/>
    <property type="molecule type" value="Genomic_DNA"/>
</dbReference>
<dbReference type="RefSeq" id="XP_755580.1">
    <property type="nucleotide sequence ID" value="XM_750487.1"/>
</dbReference>
<dbReference type="SMR" id="Q4X0S3"/>
<dbReference type="FunCoup" id="Q4X0S3">
    <property type="interactions" value="106"/>
</dbReference>
<dbReference type="STRING" id="330879.Q4X0S3"/>
<dbReference type="EnsemblFungi" id="EAL93542">
    <property type="protein sequence ID" value="EAL93542"/>
    <property type="gene ID" value="AFUA_2G12480"/>
</dbReference>
<dbReference type="GeneID" id="3513009"/>
<dbReference type="KEGG" id="afm:AFUA_2G12480"/>
<dbReference type="VEuPathDB" id="FungiDB:Afu2g12480"/>
<dbReference type="eggNOG" id="KOG3880">
    <property type="taxonomic scope" value="Eukaryota"/>
</dbReference>
<dbReference type="HOGENOM" id="CLU_029663_1_2_1"/>
<dbReference type="InParanoid" id="Q4X0S3"/>
<dbReference type="OMA" id="WLCNWQV"/>
<dbReference type="OrthoDB" id="5965864at2759"/>
<dbReference type="Proteomes" id="UP000002530">
    <property type="component" value="Chromosome 2"/>
</dbReference>
<dbReference type="GO" id="GO:0000324">
    <property type="term" value="C:fungal-type vacuole"/>
    <property type="evidence" value="ECO:0007669"/>
    <property type="project" value="EnsemblFungi"/>
</dbReference>
<dbReference type="GO" id="GO:0005774">
    <property type="term" value="C:vacuolar membrane"/>
    <property type="evidence" value="ECO:0007669"/>
    <property type="project" value="UniProtKB-SubCell"/>
</dbReference>
<dbReference type="GO" id="GO:0005773">
    <property type="term" value="C:vacuole"/>
    <property type="evidence" value="ECO:0000318"/>
    <property type="project" value="GO_Central"/>
</dbReference>
<dbReference type="GO" id="GO:1903826">
    <property type="term" value="P:L-arginine transmembrane transport"/>
    <property type="evidence" value="ECO:0007669"/>
    <property type="project" value="EnsemblFungi"/>
</dbReference>
<dbReference type="GO" id="GO:0015819">
    <property type="term" value="P:lysine transport"/>
    <property type="evidence" value="ECO:0007669"/>
    <property type="project" value="EnsemblFungi"/>
</dbReference>
<dbReference type="GO" id="GO:0051453">
    <property type="term" value="P:regulation of intracellular pH"/>
    <property type="evidence" value="ECO:0000318"/>
    <property type="project" value="GO_Central"/>
</dbReference>
<dbReference type="Gene3D" id="1.20.1250.20">
    <property type="entry name" value="MFS general substrate transporter like domains"/>
    <property type="match status" value="1"/>
</dbReference>
<dbReference type="InterPro" id="IPR003492">
    <property type="entry name" value="Battenin_disease_Cln3"/>
</dbReference>
<dbReference type="InterPro" id="IPR018460">
    <property type="entry name" value="Battenin_disease_Cln3_subgr"/>
</dbReference>
<dbReference type="InterPro" id="IPR036259">
    <property type="entry name" value="MFS_trans_sf"/>
</dbReference>
<dbReference type="PANTHER" id="PTHR10981">
    <property type="entry name" value="BATTENIN"/>
    <property type="match status" value="1"/>
</dbReference>
<dbReference type="PANTHER" id="PTHR10981:SF0">
    <property type="entry name" value="BATTENIN"/>
    <property type="match status" value="1"/>
</dbReference>
<dbReference type="Pfam" id="PF02487">
    <property type="entry name" value="CLN3"/>
    <property type="match status" value="1"/>
</dbReference>
<dbReference type="PIRSF" id="PIRSF015974">
    <property type="entry name" value="CLN3_BTN1"/>
    <property type="match status" value="1"/>
</dbReference>
<dbReference type="PRINTS" id="PR01315">
    <property type="entry name" value="BATTENIN"/>
</dbReference>
<dbReference type="SUPFAM" id="SSF103473">
    <property type="entry name" value="MFS general substrate transporter"/>
    <property type="match status" value="1"/>
</dbReference>
<feature type="chain" id="PRO_0000256256" description="Protein btn1">
    <location>
        <begin position="1"/>
        <end position="460"/>
    </location>
</feature>
<feature type="transmembrane region" description="Helical" evidence="2">
    <location>
        <begin position="42"/>
        <end position="62"/>
    </location>
</feature>
<feature type="transmembrane region" description="Helical" evidence="2">
    <location>
        <begin position="76"/>
        <end position="96"/>
    </location>
</feature>
<feature type="transmembrane region" description="Helical" evidence="2">
    <location>
        <begin position="105"/>
        <end position="125"/>
    </location>
</feature>
<feature type="transmembrane region" description="Helical" evidence="2">
    <location>
        <begin position="135"/>
        <end position="155"/>
    </location>
</feature>
<feature type="transmembrane region" description="Helical" evidence="2">
    <location>
        <begin position="164"/>
        <end position="184"/>
    </location>
</feature>
<feature type="transmembrane region" description="Helical" evidence="2">
    <location>
        <begin position="195"/>
        <end position="215"/>
    </location>
</feature>
<feature type="transmembrane region" description="Helical" evidence="2">
    <location>
        <begin position="287"/>
        <end position="307"/>
    </location>
</feature>
<feature type="transmembrane region" description="Helical" evidence="2">
    <location>
        <begin position="323"/>
        <end position="343"/>
    </location>
</feature>
<feature type="transmembrane region" description="Helical" evidence="2">
    <location>
        <begin position="356"/>
        <end position="376"/>
    </location>
</feature>
<feature type="transmembrane region" description="Helical" evidence="2">
    <location>
        <begin position="378"/>
        <end position="398"/>
    </location>
</feature>
<feature type="transmembrane region" description="Helical" evidence="2">
    <location>
        <begin position="428"/>
        <end position="448"/>
    </location>
</feature>
<sequence>MPAAADTEEEQPMLPLPGAPSSSWAQFCQRFRALFSGADPRVCVAFWLFGLINNVLYVVILSAALDLVGPSVPKGVVLLADVIPSFATKLIAPYFIHMVPYPVRIIIFVFLSAAGMLLVALSPPYTDGGTIATKLAGIVLASLSSGGGELSFVGLTHFYGPFSLAAWGSGTGAAGLVGAGAYALATTSLGLSVKATLLASSCLPAVMVVSFFMVLPRSPLQPISAAYAGYRAVEEREELAEEREFMEGDRDATFDEQERLLGASVLSDQSKKAGWQRFKRDLKRVRGLFFPFMLPLLLVYVAEYTINQGVSPTLLFPLDESPFAHFRAFYPAYNAIYQVGVFISRSSTPFFRIHDLYLPSFLQILNLVLLTLQAVFNFIPSVYIIFIIIFWEGLLGGLVYVNTFAEIGDRVPKEDREFSLGATTVSDAAGICIAGFVSMVFEVWLCDWQVTHGRDYCRRI</sequence>
<gene>
    <name type="primary">btn1</name>
    <name type="ORF">AFUA_2G12480</name>
</gene>
<protein>
    <recommendedName>
        <fullName>Protein btn1</fullName>
    </recommendedName>
</protein>
<reference key="1">
    <citation type="journal article" date="2005" name="Nature">
        <title>Genomic sequence of the pathogenic and allergenic filamentous fungus Aspergillus fumigatus.</title>
        <authorList>
            <person name="Nierman W.C."/>
            <person name="Pain A."/>
            <person name="Anderson M.J."/>
            <person name="Wortman J.R."/>
            <person name="Kim H.S."/>
            <person name="Arroyo J."/>
            <person name="Berriman M."/>
            <person name="Abe K."/>
            <person name="Archer D.B."/>
            <person name="Bermejo C."/>
            <person name="Bennett J.W."/>
            <person name="Bowyer P."/>
            <person name="Chen D."/>
            <person name="Collins M."/>
            <person name="Coulsen R."/>
            <person name="Davies R."/>
            <person name="Dyer P.S."/>
            <person name="Farman M.L."/>
            <person name="Fedorova N."/>
            <person name="Fedorova N.D."/>
            <person name="Feldblyum T.V."/>
            <person name="Fischer R."/>
            <person name="Fosker N."/>
            <person name="Fraser A."/>
            <person name="Garcia J.L."/>
            <person name="Garcia M.J."/>
            <person name="Goble A."/>
            <person name="Goldman G.H."/>
            <person name="Gomi K."/>
            <person name="Griffith-Jones S."/>
            <person name="Gwilliam R."/>
            <person name="Haas B.J."/>
            <person name="Haas H."/>
            <person name="Harris D.E."/>
            <person name="Horiuchi H."/>
            <person name="Huang J."/>
            <person name="Humphray S."/>
            <person name="Jimenez J."/>
            <person name="Keller N."/>
            <person name="Khouri H."/>
            <person name="Kitamoto K."/>
            <person name="Kobayashi T."/>
            <person name="Konzack S."/>
            <person name="Kulkarni R."/>
            <person name="Kumagai T."/>
            <person name="Lafton A."/>
            <person name="Latge J.-P."/>
            <person name="Li W."/>
            <person name="Lord A."/>
            <person name="Lu C."/>
            <person name="Majoros W.H."/>
            <person name="May G.S."/>
            <person name="Miller B.L."/>
            <person name="Mohamoud Y."/>
            <person name="Molina M."/>
            <person name="Monod M."/>
            <person name="Mouyna I."/>
            <person name="Mulligan S."/>
            <person name="Murphy L.D."/>
            <person name="O'Neil S."/>
            <person name="Paulsen I."/>
            <person name="Penalva M.A."/>
            <person name="Pertea M."/>
            <person name="Price C."/>
            <person name="Pritchard B.L."/>
            <person name="Quail M.A."/>
            <person name="Rabbinowitsch E."/>
            <person name="Rawlins N."/>
            <person name="Rajandream M.A."/>
            <person name="Reichard U."/>
            <person name="Renauld H."/>
            <person name="Robson G.D."/>
            <person name="Rodriguez de Cordoba S."/>
            <person name="Rodriguez-Pena J.M."/>
            <person name="Ronning C.M."/>
            <person name="Rutter S."/>
            <person name="Salzberg S.L."/>
            <person name="Sanchez M."/>
            <person name="Sanchez-Ferrero J.C."/>
            <person name="Saunders D."/>
            <person name="Seeger K."/>
            <person name="Squares R."/>
            <person name="Squares S."/>
            <person name="Takeuchi M."/>
            <person name="Tekaia F."/>
            <person name="Turner G."/>
            <person name="Vazquez de Aldana C.R."/>
            <person name="Weidman J."/>
            <person name="White O."/>
            <person name="Woodward J.R."/>
            <person name="Yu J.-H."/>
            <person name="Fraser C.M."/>
            <person name="Galagan J.E."/>
            <person name="Asai K."/>
            <person name="Machida M."/>
            <person name="Hall N."/>
            <person name="Barrell B.G."/>
            <person name="Denning D.W."/>
        </authorList>
    </citation>
    <scope>NUCLEOTIDE SEQUENCE [LARGE SCALE GENOMIC DNA]</scope>
    <source>
        <strain>ATCC MYA-4609 / CBS 101355 / FGSC A1100 / Af293</strain>
    </source>
</reference>